<gene>
    <name evidence="1" type="primary">cpfC</name>
    <name type="ordered locus">Cgl1537</name>
    <name type="ordered locus">cg1734</name>
</gene>
<name>CPFC_CORGL</name>
<dbReference type="EC" id="4.99.1.9" evidence="1"/>
<dbReference type="EMBL" id="BA000036">
    <property type="protein sequence ID" value="BAB98930.1"/>
    <property type="molecule type" value="Genomic_DNA"/>
</dbReference>
<dbReference type="EMBL" id="BX927152">
    <property type="protein sequence ID" value="CAF21545.1"/>
    <property type="molecule type" value="Genomic_DNA"/>
</dbReference>
<dbReference type="RefSeq" id="NP_600752.1">
    <property type="nucleotide sequence ID" value="NC_003450.3"/>
</dbReference>
<dbReference type="RefSeq" id="WP_011014434.1">
    <property type="nucleotide sequence ID" value="NC_006958.1"/>
</dbReference>
<dbReference type="SMR" id="Q8NQA1"/>
<dbReference type="STRING" id="196627.cg1734"/>
<dbReference type="KEGG" id="cgb:cg1734"/>
<dbReference type="KEGG" id="cgl:Cgl1537"/>
<dbReference type="PATRIC" id="fig|196627.13.peg.1504"/>
<dbReference type="eggNOG" id="COG0276">
    <property type="taxonomic scope" value="Bacteria"/>
</dbReference>
<dbReference type="HOGENOM" id="CLU_018884_2_0_11"/>
<dbReference type="OrthoDB" id="9776380at2"/>
<dbReference type="BioCyc" id="CORYNE:G18NG-11122-MONOMER"/>
<dbReference type="UniPathway" id="UPA00252"/>
<dbReference type="Proteomes" id="UP000000582">
    <property type="component" value="Chromosome"/>
</dbReference>
<dbReference type="Proteomes" id="UP000001009">
    <property type="component" value="Chromosome"/>
</dbReference>
<dbReference type="GO" id="GO:0005737">
    <property type="term" value="C:cytoplasm"/>
    <property type="evidence" value="ECO:0007669"/>
    <property type="project" value="UniProtKB-SubCell"/>
</dbReference>
<dbReference type="GO" id="GO:0004325">
    <property type="term" value="F:ferrochelatase activity"/>
    <property type="evidence" value="ECO:0007669"/>
    <property type="project" value="UniProtKB-UniRule"/>
</dbReference>
<dbReference type="GO" id="GO:0046872">
    <property type="term" value="F:metal ion binding"/>
    <property type="evidence" value="ECO:0007669"/>
    <property type="project" value="UniProtKB-KW"/>
</dbReference>
<dbReference type="GO" id="GO:0006783">
    <property type="term" value="P:heme biosynthetic process"/>
    <property type="evidence" value="ECO:0007669"/>
    <property type="project" value="UniProtKB-UniRule"/>
</dbReference>
<dbReference type="CDD" id="cd00419">
    <property type="entry name" value="Ferrochelatase_C"/>
    <property type="match status" value="1"/>
</dbReference>
<dbReference type="CDD" id="cd03411">
    <property type="entry name" value="Ferrochelatase_N"/>
    <property type="match status" value="1"/>
</dbReference>
<dbReference type="Gene3D" id="3.40.50.1400">
    <property type="match status" value="2"/>
</dbReference>
<dbReference type="HAMAP" id="MF_00323">
    <property type="entry name" value="Ferrochelatase"/>
    <property type="match status" value="1"/>
</dbReference>
<dbReference type="InterPro" id="IPR001015">
    <property type="entry name" value="Ferrochelatase"/>
</dbReference>
<dbReference type="InterPro" id="IPR033644">
    <property type="entry name" value="Ferrochelatase_C"/>
</dbReference>
<dbReference type="InterPro" id="IPR033659">
    <property type="entry name" value="Ferrochelatase_N"/>
</dbReference>
<dbReference type="NCBIfam" id="TIGR00109">
    <property type="entry name" value="hemH"/>
    <property type="match status" value="1"/>
</dbReference>
<dbReference type="NCBIfam" id="NF000689">
    <property type="entry name" value="PRK00035.2-1"/>
    <property type="match status" value="1"/>
</dbReference>
<dbReference type="PANTHER" id="PTHR11108">
    <property type="entry name" value="FERROCHELATASE"/>
    <property type="match status" value="1"/>
</dbReference>
<dbReference type="PANTHER" id="PTHR11108:SF1">
    <property type="entry name" value="FERROCHELATASE, MITOCHONDRIAL"/>
    <property type="match status" value="1"/>
</dbReference>
<dbReference type="Pfam" id="PF00762">
    <property type="entry name" value="Ferrochelatase"/>
    <property type="match status" value="1"/>
</dbReference>
<dbReference type="SUPFAM" id="SSF53800">
    <property type="entry name" value="Chelatase"/>
    <property type="match status" value="1"/>
</dbReference>
<accession>Q8NQA1</accession>
<feature type="chain" id="PRO_0000175134" description="Coproporphyrin III ferrochelatase">
    <location>
        <begin position="1"/>
        <end position="370"/>
    </location>
</feature>
<feature type="binding site" evidence="1">
    <location>
        <position position="58"/>
    </location>
    <ligand>
        <name>Fe-coproporphyrin III</name>
        <dbReference type="ChEBI" id="CHEBI:68438"/>
    </ligand>
</feature>
<feature type="binding site" evidence="1">
    <location>
        <position position="127"/>
    </location>
    <ligand>
        <name>Fe-coproporphyrin III</name>
        <dbReference type="ChEBI" id="CHEBI:68438"/>
    </ligand>
</feature>
<feature type="binding site" evidence="1">
    <location>
        <position position="189"/>
    </location>
    <ligand>
        <name>Fe(2+)</name>
        <dbReference type="ChEBI" id="CHEBI:29033"/>
    </ligand>
</feature>
<feature type="binding site" evidence="1">
    <location>
        <position position="276"/>
    </location>
    <ligand>
        <name>Fe(2+)</name>
        <dbReference type="ChEBI" id="CHEBI:29033"/>
    </ligand>
</feature>
<reference key="1">
    <citation type="journal article" date="2003" name="Appl. Microbiol. Biotechnol.">
        <title>The Corynebacterium glutamicum genome: features and impacts on biotechnological processes.</title>
        <authorList>
            <person name="Ikeda M."/>
            <person name="Nakagawa S."/>
        </authorList>
    </citation>
    <scope>NUCLEOTIDE SEQUENCE [LARGE SCALE GENOMIC DNA]</scope>
    <source>
        <strain>ATCC 13032 / DSM 20300 / JCM 1318 / BCRC 11384 / CCUG 27702 / LMG 3730 / NBRC 12168 / NCIMB 10025 / NRRL B-2784 / 534</strain>
    </source>
</reference>
<reference key="2">
    <citation type="journal article" date="2003" name="J. Biotechnol.">
        <title>The complete Corynebacterium glutamicum ATCC 13032 genome sequence and its impact on the production of L-aspartate-derived amino acids and vitamins.</title>
        <authorList>
            <person name="Kalinowski J."/>
            <person name="Bathe B."/>
            <person name="Bartels D."/>
            <person name="Bischoff N."/>
            <person name="Bott M."/>
            <person name="Burkovski A."/>
            <person name="Dusch N."/>
            <person name="Eggeling L."/>
            <person name="Eikmanns B.J."/>
            <person name="Gaigalat L."/>
            <person name="Goesmann A."/>
            <person name="Hartmann M."/>
            <person name="Huthmacher K."/>
            <person name="Kraemer R."/>
            <person name="Linke B."/>
            <person name="McHardy A.C."/>
            <person name="Meyer F."/>
            <person name="Moeckel B."/>
            <person name="Pfefferle W."/>
            <person name="Puehler A."/>
            <person name="Rey D.A."/>
            <person name="Rueckert C."/>
            <person name="Rupp O."/>
            <person name="Sahm H."/>
            <person name="Wendisch V.F."/>
            <person name="Wiegraebe I."/>
            <person name="Tauch A."/>
        </authorList>
    </citation>
    <scope>NUCLEOTIDE SEQUENCE [LARGE SCALE GENOMIC DNA]</scope>
    <source>
        <strain>ATCC 13032 / DSM 20300 / JCM 1318 / BCRC 11384 / CCUG 27702 / LMG 3730 / NBRC 12168 / NCIMB 10025 / NRRL B-2784 / 534</strain>
    </source>
</reference>
<protein>
    <recommendedName>
        <fullName evidence="1">Coproporphyrin III ferrochelatase</fullName>
        <ecNumber evidence="1">4.99.1.9</ecNumber>
    </recommendedName>
</protein>
<keyword id="KW-0963">Cytoplasm</keyword>
<keyword id="KW-0350">Heme biosynthesis</keyword>
<keyword id="KW-0408">Iron</keyword>
<keyword id="KW-0456">Lyase</keyword>
<keyword id="KW-0479">Metal-binding</keyword>
<keyword id="KW-0627">Porphyrin biosynthesis</keyword>
<keyword id="KW-1185">Reference proteome</keyword>
<proteinExistence type="inferred from homology"/>
<evidence type="ECO:0000255" key="1">
    <source>
        <dbReference type="HAMAP-Rule" id="MF_00323"/>
    </source>
</evidence>
<organism>
    <name type="scientific">Corynebacterium glutamicum (strain ATCC 13032 / DSM 20300 / JCM 1318 / BCRC 11384 / CCUG 27702 / LMG 3730 / NBRC 12168 / NCIMB 10025 / NRRL B-2784 / 534)</name>
    <dbReference type="NCBI Taxonomy" id="196627"/>
    <lineage>
        <taxon>Bacteria</taxon>
        <taxon>Bacillati</taxon>
        <taxon>Actinomycetota</taxon>
        <taxon>Actinomycetes</taxon>
        <taxon>Mycobacteriales</taxon>
        <taxon>Corynebacteriaceae</taxon>
        <taxon>Corynebacterium</taxon>
    </lineage>
</organism>
<comment type="function">
    <text evidence="1">Involved in coproporphyrin-dependent heme b biosynthesis. Catalyzes the insertion of ferrous iron into coproporphyrin III to form Fe-coproporphyrin III.</text>
</comment>
<comment type="catalytic activity">
    <reaction evidence="1">
        <text>Fe-coproporphyrin III + 2 H(+) = coproporphyrin III + Fe(2+)</text>
        <dbReference type="Rhea" id="RHEA:49572"/>
        <dbReference type="ChEBI" id="CHEBI:15378"/>
        <dbReference type="ChEBI" id="CHEBI:29033"/>
        <dbReference type="ChEBI" id="CHEBI:68438"/>
        <dbReference type="ChEBI" id="CHEBI:131725"/>
        <dbReference type="EC" id="4.99.1.9"/>
    </reaction>
    <physiologicalReaction direction="right-to-left" evidence="1">
        <dbReference type="Rhea" id="RHEA:49574"/>
    </physiologicalReaction>
</comment>
<comment type="pathway">
    <text evidence="1">Porphyrin-containing compound metabolism; protoheme biosynthesis.</text>
</comment>
<comment type="subcellular location">
    <subcellularLocation>
        <location evidence="1">Cytoplasm</location>
    </subcellularLocation>
</comment>
<comment type="similarity">
    <text evidence="1">Belongs to the ferrochelatase family.</text>
</comment>
<sequence>MNERTSDAFDALLVLSFGGPEGHEEVRPFLENVTHGRGIPPERLDEVAVHYHHFGGISPINALNREIIANVEKELASRDHKLPVYFGNRNWKPFDNEAAEQMADDGVKNALVLATSAWGGYSGCRQYQEDIQGMIKHLESQGQSITFTKLRQFYDHPRFVSTMAQLVQDSYAKLPDELRDEARLVFTAHSIPLTADNAAGTPEDGSLYSTQVKEASALIAEAVGVSDFDVVWQSRSGSPHTPWLEPDIVDHAVELNEKGQKALVVCPVGFISDHMEVIWDLDSELMEEAEKRNMVVERVATVGPTDEFAALVVDLIEEAELKRVIERLGKLPARGSSVNGAPCGDGCCGTAKHKTARVNPNARSAAPAAN</sequence>